<feature type="chain" id="PRO_1000021368" description="Shikimate dehydrogenase (NADP(+))">
    <location>
        <begin position="1"/>
        <end position="273"/>
    </location>
</feature>
<feature type="active site" description="Proton acceptor" evidence="1">
    <location>
        <position position="66"/>
    </location>
</feature>
<feature type="binding site" evidence="1">
    <location>
        <begin position="15"/>
        <end position="17"/>
    </location>
    <ligand>
        <name>shikimate</name>
        <dbReference type="ChEBI" id="CHEBI:36208"/>
    </ligand>
</feature>
<feature type="binding site" evidence="1">
    <location>
        <position position="62"/>
    </location>
    <ligand>
        <name>shikimate</name>
        <dbReference type="ChEBI" id="CHEBI:36208"/>
    </ligand>
</feature>
<feature type="binding site" evidence="1">
    <location>
        <position position="78"/>
    </location>
    <ligand>
        <name>NADP(+)</name>
        <dbReference type="ChEBI" id="CHEBI:58349"/>
    </ligand>
</feature>
<feature type="binding site" evidence="1">
    <location>
        <position position="87"/>
    </location>
    <ligand>
        <name>shikimate</name>
        <dbReference type="ChEBI" id="CHEBI:36208"/>
    </ligand>
</feature>
<feature type="binding site" evidence="1">
    <location>
        <position position="103"/>
    </location>
    <ligand>
        <name>shikimate</name>
        <dbReference type="ChEBI" id="CHEBI:36208"/>
    </ligand>
</feature>
<feature type="binding site" evidence="1">
    <location>
        <begin position="127"/>
        <end position="131"/>
    </location>
    <ligand>
        <name>NADP(+)</name>
        <dbReference type="ChEBI" id="CHEBI:58349"/>
    </ligand>
</feature>
<feature type="binding site" evidence="1">
    <location>
        <begin position="150"/>
        <end position="155"/>
    </location>
    <ligand>
        <name>NADP(+)</name>
        <dbReference type="ChEBI" id="CHEBI:58349"/>
    </ligand>
</feature>
<feature type="binding site" evidence="1">
    <location>
        <position position="218"/>
    </location>
    <ligand>
        <name>NADP(+)</name>
        <dbReference type="ChEBI" id="CHEBI:58349"/>
    </ligand>
</feature>
<feature type="binding site" evidence="1">
    <location>
        <position position="238"/>
    </location>
    <ligand>
        <name>NADP(+)</name>
        <dbReference type="ChEBI" id="CHEBI:58349"/>
    </ligand>
</feature>
<name>AROE_YERPS</name>
<proteinExistence type="inferred from homology"/>
<reference key="1">
    <citation type="journal article" date="2004" name="Proc. Natl. Acad. Sci. U.S.A.">
        <title>Insights into the evolution of Yersinia pestis through whole-genome comparison with Yersinia pseudotuberculosis.</title>
        <authorList>
            <person name="Chain P.S.G."/>
            <person name="Carniel E."/>
            <person name="Larimer F.W."/>
            <person name="Lamerdin J."/>
            <person name="Stoutland P.O."/>
            <person name="Regala W.M."/>
            <person name="Georgescu A.M."/>
            <person name="Vergez L.M."/>
            <person name="Land M.L."/>
            <person name="Motin V.L."/>
            <person name="Brubaker R.R."/>
            <person name="Fowler J."/>
            <person name="Hinnebusch J."/>
            <person name="Marceau M."/>
            <person name="Medigue C."/>
            <person name="Simonet M."/>
            <person name="Chenal-Francisque V."/>
            <person name="Souza B."/>
            <person name="Dacheux D."/>
            <person name="Elliott J.M."/>
            <person name="Derbise A."/>
            <person name="Hauser L.J."/>
            <person name="Garcia E."/>
        </authorList>
    </citation>
    <scope>NUCLEOTIDE SEQUENCE [LARGE SCALE GENOMIC DNA]</scope>
    <source>
        <strain>IP32953</strain>
    </source>
</reference>
<accession>Q664V9</accession>
<dbReference type="EC" id="1.1.1.25" evidence="1"/>
<dbReference type="EMBL" id="BX936398">
    <property type="protein sequence ID" value="CAH22898.1"/>
    <property type="molecule type" value="Genomic_DNA"/>
</dbReference>
<dbReference type="RefSeq" id="WP_002209026.1">
    <property type="nucleotide sequence ID" value="NZ_CP009712.1"/>
</dbReference>
<dbReference type="SMR" id="Q664V9"/>
<dbReference type="GeneID" id="57974357"/>
<dbReference type="KEGG" id="ypo:BZ17_2927"/>
<dbReference type="KEGG" id="yps:YPTB3660"/>
<dbReference type="PATRIC" id="fig|273123.14.peg.3068"/>
<dbReference type="UniPathway" id="UPA00053">
    <property type="reaction ID" value="UER00087"/>
</dbReference>
<dbReference type="Proteomes" id="UP000001011">
    <property type="component" value="Chromosome"/>
</dbReference>
<dbReference type="GO" id="GO:0005829">
    <property type="term" value="C:cytosol"/>
    <property type="evidence" value="ECO:0007669"/>
    <property type="project" value="TreeGrafter"/>
</dbReference>
<dbReference type="GO" id="GO:0050661">
    <property type="term" value="F:NADP binding"/>
    <property type="evidence" value="ECO:0007669"/>
    <property type="project" value="InterPro"/>
</dbReference>
<dbReference type="GO" id="GO:0004764">
    <property type="term" value="F:shikimate 3-dehydrogenase (NADP+) activity"/>
    <property type="evidence" value="ECO:0007669"/>
    <property type="project" value="UniProtKB-UniRule"/>
</dbReference>
<dbReference type="GO" id="GO:0008652">
    <property type="term" value="P:amino acid biosynthetic process"/>
    <property type="evidence" value="ECO:0007669"/>
    <property type="project" value="UniProtKB-KW"/>
</dbReference>
<dbReference type="GO" id="GO:0009073">
    <property type="term" value="P:aromatic amino acid family biosynthetic process"/>
    <property type="evidence" value="ECO:0007669"/>
    <property type="project" value="UniProtKB-KW"/>
</dbReference>
<dbReference type="GO" id="GO:0009423">
    <property type="term" value="P:chorismate biosynthetic process"/>
    <property type="evidence" value="ECO:0007669"/>
    <property type="project" value="UniProtKB-UniRule"/>
</dbReference>
<dbReference type="GO" id="GO:0019632">
    <property type="term" value="P:shikimate metabolic process"/>
    <property type="evidence" value="ECO:0007669"/>
    <property type="project" value="InterPro"/>
</dbReference>
<dbReference type="CDD" id="cd01065">
    <property type="entry name" value="NAD_bind_Shikimate_DH"/>
    <property type="match status" value="1"/>
</dbReference>
<dbReference type="FunFam" id="3.40.50.10860:FF:000006">
    <property type="entry name" value="Shikimate dehydrogenase (NADP(+))"/>
    <property type="match status" value="1"/>
</dbReference>
<dbReference type="FunFam" id="3.40.50.720:FF:000104">
    <property type="entry name" value="Shikimate dehydrogenase (NADP(+))"/>
    <property type="match status" value="1"/>
</dbReference>
<dbReference type="Gene3D" id="3.40.50.10860">
    <property type="entry name" value="Leucine Dehydrogenase, chain A, domain 1"/>
    <property type="match status" value="1"/>
</dbReference>
<dbReference type="Gene3D" id="3.40.50.720">
    <property type="entry name" value="NAD(P)-binding Rossmann-like Domain"/>
    <property type="match status" value="1"/>
</dbReference>
<dbReference type="HAMAP" id="MF_00222">
    <property type="entry name" value="Shikimate_DH_AroE"/>
    <property type="match status" value="1"/>
</dbReference>
<dbReference type="InterPro" id="IPR046346">
    <property type="entry name" value="Aminoacid_DH-like_N_sf"/>
</dbReference>
<dbReference type="InterPro" id="IPR036291">
    <property type="entry name" value="NAD(P)-bd_dom_sf"/>
</dbReference>
<dbReference type="InterPro" id="IPR041121">
    <property type="entry name" value="SDH_C"/>
</dbReference>
<dbReference type="InterPro" id="IPR011342">
    <property type="entry name" value="Shikimate_DH"/>
</dbReference>
<dbReference type="InterPro" id="IPR013708">
    <property type="entry name" value="Shikimate_DH-bd_N"/>
</dbReference>
<dbReference type="InterPro" id="IPR022893">
    <property type="entry name" value="Shikimate_DH_fam"/>
</dbReference>
<dbReference type="InterPro" id="IPR006151">
    <property type="entry name" value="Shikm_DH/Glu-tRNA_Rdtase"/>
</dbReference>
<dbReference type="NCBIfam" id="TIGR00507">
    <property type="entry name" value="aroE"/>
    <property type="match status" value="1"/>
</dbReference>
<dbReference type="NCBIfam" id="NF001310">
    <property type="entry name" value="PRK00258.1-2"/>
    <property type="match status" value="1"/>
</dbReference>
<dbReference type="PANTHER" id="PTHR21089:SF1">
    <property type="entry name" value="BIFUNCTIONAL 3-DEHYDROQUINATE DEHYDRATASE_SHIKIMATE DEHYDROGENASE, CHLOROPLASTIC"/>
    <property type="match status" value="1"/>
</dbReference>
<dbReference type="PANTHER" id="PTHR21089">
    <property type="entry name" value="SHIKIMATE DEHYDROGENASE"/>
    <property type="match status" value="1"/>
</dbReference>
<dbReference type="Pfam" id="PF18317">
    <property type="entry name" value="SDH_C"/>
    <property type="match status" value="1"/>
</dbReference>
<dbReference type="Pfam" id="PF01488">
    <property type="entry name" value="Shikimate_DH"/>
    <property type="match status" value="1"/>
</dbReference>
<dbReference type="Pfam" id="PF08501">
    <property type="entry name" value="Shikimate_dh_N"/>
    <property type="match status" value="1"/>
</dbReference>
<dbReference type="SUPFAM" id="SSF53223">
    <property type="entry name" value="Aminoacid dehydrogenase-like, N-terminal domain"/>
    <property type="match status" value="1"/>
</dbReference>
<dbReference type="SUPFAM" id="SSF51735">
    <property type="entry name" value="NAD(P)-binding Rossmann-fold domains"/>
    <property type="match status" value="1"/>
</dbReference>
<keyword id="KW-0028">Amino-acid biosynthesis</keyword>
<keyword id="KW-0057">Aromatic amino acid biosynthesis</keyword>
<keyword id="KW-0521">NADP</keyword>
<keyword id="KW-0560">Oxidoreductase</keyword>
<comment type="function">
    <text evidence="1">Involved in the biosynthesis of the chorismate, which leads to the biosynthesis of aromatic amino acids. Catalyzes the reversible NADPH linked reduction of 3-dehydroshikimate (DHSA) to yield shikimate (SA).</text>
</comment>
<comment type="catalytic activity">
    <reaction evidence="1">
        <text>shikimate + NADP(+) = 3-dehydroshikimate + NADPH + H(+)</text>
        <dbReference type="Rhea" id="RHEA:17737"/>
        <dbReference type="ChEBI" id="CHEBI:15378"/>
        <dbReference type="ChEBI" id="CHEBI:16630"/>
        <dbReference type="ChEBI" id="CHEBI:36208"/>
        <dbReference type="ChEBI" id="CHEBI:57783"/>
        <dbReference type="ChEBI" id="CHEBI:58349"/>
        <dbReference type="EC" id="1.1.1.25"/>
    </reaction>
</comment>
<comment type="pathway">
    <text evidence="1">Metabolic intermediate biosynthesis; chorismate biosynthesis; chorismate from D-erythrose 4-phosphate and phosphoenolpyruvate: step 4/7.</text>
</comment>
<comment type="subunit">
    <text evidence="1">Homodimer.</text>
</comment>
<comment type="similarity">
    <text evidence="1">Belongs to the shikimate dehydrogenase family.</text>
</comment>
<sequence>MDQKFAVFGNPISHSKSPRIHTLFSEQTGIEHRYGKVLAPSEAFENTLVSFFADGAQGANITTPFKERAYDQCDELTDRASLAGAVNTIKRLEDGRLLGDNTDGIGLLSDLERQNLIRTTDHILLVGAGGAARGVILPLLSYGCTVVVTNRTHTRAQQLAKVFNHIGDIDVCEMSELAGQRFDLVINATASGLHGEVPNLPAAILTSQTRCYDMFYQAGTTPFLAWAQRLGLADYADGLGMLVGQAAHAFKLWHGVMPEITPVLAQLRSELGK</sequence>
<organism>
    <name type="scientific">Yersinia pseudotuberculosis serotype I (strain IP32953)</name>
    <dbReference type="NCBI Taxonomy" id="273123"/>
    <lineage>
        <taxon>Bacteria</taxon>
        <taxon>Pseudomonadati</taxon>
        <taxon>Pseudomonadota</taxon>
        <taxon>Gammaproteobacteria</taxon>
        <taxon>Enterobacterales</taxon>
        <taxon>Yersiniaceae</taxon>
        <taxon>Yersinia</taxon>
    </lineage>
</organism>
<gene>
    <name evidence="1" type="primary">aroE</name>
    <name type="ordered locus">YPTB3660</name>
</gene>
<protein>
    <recommendedName>
        <fullName evidence="1">Shikimate dehydrogenase (NADP(+))</fullName>
        <shortName evidence="1">SDH</shortName>
        <ecNumber evidence="1">1.1.1.25</ecNumber>
    </recommendedName>
</protein>
<evidence type="ECO:0000255" key="1">
    <source>
        <dbReference type="HAMAP-Rule" id="MF_00222"/>
    </source>
</evidence>